<accession>Q5UQZ3</accession>
<sequence>MNSKISVSNLDSNVIDIITRILKSQSNTDVDNATDIIIGAISKNILTLQDDRDLSSIKQIFQSINDSECAFIGRQIDNEIVFTVQDIAMYLARDTFNPLNNDVNTFIKYSWSSYSNKQGTNEKRDTINIVIKNQNVETYTYTKIDLPYLLVHVARYLSIFN</sequence>
<comment type="subcellular location">
    <subcellularLocation>
        <location evidence="1">Virion</location>
    </subcellularLocation>
</comment>
<comment type="similarity">
    <text evidence="2">Belongs to the mimivirus L761/L899 family.</text>
</comment>
<dbReference type="EMBL" id="AY653733">
    <property type="protein sequence ID" value="AAV51156.1"/>
    <property type="molecule type" value="Genomic_DNA"/>
</dbReference>
<dbReference type="SMR" id="Q5UQZ3"/>
<dbReference type="KEGG" id="vg:9925568"/>
<dbReference type="OrthoDB" id="31266at10239"/>
<dbReference type="Proteomes" id="UP000001134">
    <property type="component" value="Genome"/>
</dbReference>
<dbReference type="GO" id="GO:0044423">
    <property type="term" value="C:virion component"/>
    <property type="evidence" value="ECO:0007669"/>
    <property type="project" value="UniProtKB-KW"/>
</dbReference>
<evidence type="ECO:0000269" key="1">
    <source>
    </source>
</evidence>
<evidence type="ECO:0000305" key="2"/>
<proteinExistence type="evidence at protein level"/>
<organismHost>
    <name type="scientific">Acanthamoeba polyphaga</name>
    <name type="common">Amoeba</name>
    <dbReference type="NCBI Taxonomy" id="5757"/>
</organismHost>
<feature type="chain" id="PRO_0000071390" description="Uncharacterized protein L899">
    <location>
        <begin position="1"/>
        <end position="161"/>
    </location>
</feature>
<reference key="1">
    <citation type="journal article" date="2004" name="Science">
        <title>The 1.2-megabase genome sequence of Mimivirus.</title>
        <authorList>
            <person name="Raoult D."/>
            <person name="Audic S."/>
            <person name="Robert C."/>
            <person name="Abergel C."/>
            <person name="Renesto P."/>
            <person name="Ogata H."/>
            <person name="La Scola B."/>
            <person name="Susan M."/>
            <person name="Claverie J.-M."/>
        </authorList>
    </citation>
    <scope>NUCLEOTIDE SEQUENCE [LARGE SCALE GENOMIC DNA]</scope>
    <source>
        <strain>Rowbotham-Bradford</strain>
    </source>
</reference>
<reference key="2">
    <citation type="journal article" date="2006" name="J. Virol.">
        <title>Mimivirus giant particles incorporate a large fraction of anonymous and unique gene products.</title>
        <authorList>
            <person name="Renesto P."/>
            <person name="Abergel C."/>
            <person name="Decloquement P."/>
            <person name="Moinier D."/>
            <person name="Azza S."/>
            <person name="Ogata H."/>
            <person name="Fourquet P."/>
            <person name="Gorvel J.-P."/>
            <person name="Claverie J.-M."/>
            <person name="Raoult D."/>
        </authorList>
    </citation>
    <scope>IDENTIFICATION BY MASS SPECTROMETRY [LARGE SCALE ANALYSIS]</scope>
    <scope>SUBCELLULAR LOCATION</scope>
</reference>
<protein>
    <recommendedName>
        <fullName>Uncharacterized protein L899</fullName>
    </recommendedName>
</protein>
<name>YL899_MIMIV</name>
<keyword id="KW-1185">Reference proteome</keyword>
<keyword id="KW-0946">Virion</keyword>
<organism>
    <name type="scientific">Acanthamoeba polyphaga mimivirus</name>
    <name type="common">APMV</name>
    <dbReference type="NCBI Taxonomy" id="212035"/>
    <lineage>
        <taxon>Viruses</taxon>
        <taxon>Varidnaviria</taxon>
        <taxon>Bamfordvirae</taxon>
        <taxon>Nucleocytoviricota</taxon>
        <taxon>Megaviricetes</taxon>
        <taxon>Imitervirales</taxon>
        <taxon>Mimiviridae</taxon>
        <taxon>Megamimivirinae</taxon>
        <taxon>Mimivirus</taxon>
        <taxon>Mimivirus bradfordmassiliense</taxon>
    </lineage>
</organism>
<gene>
    <name type="ordered locus">MIMI_L899</name>
</gene>